<accession>Q8PXL7</accession>
<sequence length="291" mass="30704">MFEGAMPALITPFTKDDRIDREGLQRNIAFVEEGGVSGIVPCGTTGESATLSAAEHEEVIDIAVECSKVPVIAGTGSNNTGEALQFTKHAADAGVDGVLLISPYYNKPNPAGLLAHFKKIAEAVDIPMILYNVPSRTGQDMPVDVIVELAKVENIVGIKEASGNAAKVSQILENTMDDDFVVLSGEDGLTLPIISMGGRGVISVAANIVPDKMSGMVNAALKGDYETARKLHFEIAPLIRALFLETNPIPVKKAAELVGLASGHLRLPLAPISDANQAKLANELRKLGVME</sequence>
<dbReference type="EC" id="4.3.3.7" evidence="1"/>
<dbReference type="EMBL" id="AE008384">
    <property type="protein sequence ID" value="AAM30897.1"/>
    <property type="molecule type" value="Genomic_DNA"/>
</dbReference>
<dbReference type="RefSeq" id="WP_011033150.1">
    <property type="nucleotide sequence ID" value="NC_003901.1"/>
</dbReference>
<dbReference type="SMR" id="Q8PXL7"/>
<dbReference type="GeneID" id="82160235"/>
<dbReference type="KEGG" id="mma:MM_1201"/>
<dbReference type="PATRIC" id="fig|192952.21.peg.1405"/>
<dbReference type="eggNOG" id="arCOG04172">
    <property type="taxonomic scope" value="Archaea"/>
</dbReference>
<dbReference type="HOGENOM" id="CLU_049343_7_0_2"/>
<dbReference type="UniPathway" id="UPA00034">
    <property type="reaction ID" value="UER00017"/>
</dbReference>
<dbReference type="Proteomes" id="UP000000595">
    <property type="component" value="Chromosome"/>
</dbReference>
<dbReference type="GO" id="GO:0005737">
    <property type="term" value="C:cytoplasm"/>
    <property type="evidence" value="ECO:0007669"/>
    <property type="project" value="UniProtKB-SubCell"/>
</dbReference>
<dbReference type="GO" id="GO:0008675">
    <property type="term" value="F:2-dehydro-3-deoxy-phosphogluconate aldolase activity"/>
    <property type="evidence" value="ECO:0007669"/>
    <property type="project" value="UniProtKB-ARBA"/>
</dbReference>
<dbReference type="GO" id="GO:0008840">
    <property type="term" value="F:4-hydroxy-tetrahydrodipicolinate synthase activity"/>
    <property type="evidence" value="ECO:0007669"/>
    <property type="project" value="UniProtKB-UniRule"/>
</dbReference>
<dbReference type="GO" id="GO:0019877">
    <property type="term" value="P:diaminopimelate biosynthetic process"/>
    <property type="evidence" value="ECO:0007669"/>
    <property type="project" value="UniProtKB-UniRule"/>
</dbReference>
<dbReference type="GO" id="GO:0009089">
    <property type="term" value="P:lysine biosynthetic process via diaminopimelate"/>
    <property type="evidence" value="ECO:0007669"/>
    <property type="project" value="UniProtKB-UniRule"/>
</dbReference>
<dbReference type="CDD" id="cd00950">
    <property type="entry name" value="DHDPS"/>
    <property type="match status" value="1"/>
</dbReference>
<dbReference type="Gene3D" id="3.20.20.70">
    <property type="entry name" value="Aldolase class I"/>
    <property type="match status" value="1"/>
</dbReference>
<dbReference type="HAMAP" id="MF_00418">
    <property type="entry name" value="DapA"/>
    <property type="match status" value="1"/>
</dbReference>
<dbReference type="InterPro" id="IPR013785">
    <property type="entry name" value="Aldolase_TIM"/>
</dbReference>
<dbReference type="InterPro" id="IPR005263">
    <property type="entry name" value="DapA"/>
</dbReference>
<dbReference type="InterPro" id="IPR002220">
    <property type="entry name" value="DapA-like"/>
</dbReference>
<dbReference type="InterPro" id="IPR020625">
    <property type="entry name" value="Schiff_base-form_aldolases_AS"/>
</dbReference>
<dbReference type="InterPro" id="IPR020624">
    <property type="entry name" value="Schiff_base-form_aldolases_CS"/>
</dbReference>
<dbReference type="NCBIfam" id="TIGR00674">
    <property type="entry name" value="dapA"/>
    <property type="match status" value="1"/>
</dbReference>
<dbReference type="PANTHER" id="PTHR12128:SF66">
    <property type="entry name" value="4-HYDROXY-2-OXOGLUTARATE ALDOLASE, MITOCHONDRIAL"/>
    <property type="match status" value="1"/>
</dbReference>
<dbReference type="PANTHER" id="PTHR12128">
    <property type="entry name" value="DIHYDRODIPICOLINATE SYNTHASE"/>
    <property type="match status" value="1"/>
</dbReference>
<dbReference type="Pfam" id="PF00701">
    <property type="entry name" value="DHDPS"/>
    <property type="match status" value="1"/>
</dbReference>
<dbReference type="PIRSF" id="PIRSF001365">
    <property type="entry name" value="DHDPS"/>
    <property type="match status" value="1"/>
</dbReference>
<dbReference type="PRINTS" id="PR00146">
    <property type="entry name" value="DHPICSNTHASE"/>
</dbReference>
<dbReference type="SMART" id="SM01130">
    <property type="entry name" value="DHDPS"/>
    <property type="match status" value="1"/>
</dbReference>
<dbReference type="SUPFAM" id="SSF51569">
    <property type="entry name" value="Aldolase"/>
    <property type="match status" value="1"/>
</dbReference>
<dbReference type="PROSITE" id="PS00665">
    <property type="entry name" value="DHDPS_1"/>
    <property type="match status" value="1"/>
</dbReference>
<dbReference type="PROSITE" id="PS00666">
    <property type="entry name" value="DHDPS_2"/>
    <property type="match status" value="1"/>
</dbReference>
<feature type="chain" id="PRO_0000103199" description="4-hydroxy-tetrahydrodipicolinate synthase">
    <location>
        <begin position="1"/>
        <end position="291"/>
    </location>
</feature>
<feature type="active site" description="Proton donor/acceptor" evidence="1">
    <location>
        <position position="131"/>
    </location>
</feature>
<feature type="active site" description="Schiff-base intermediate with substrate" evidence="1">
    <location>
        <position position="159"/>
    </location>
</feature>
<feature type="binding site" evidence="1">
    <location>
        <position position="45"/>
    </location>
    <ligand>
        <name>pyruvate</name>
        <dbReference type="ChEBI" id="CHEBI:15361"/>
    </ligand>
</feature>
<feature type="binding site" evidence="1">
    <location>
        <position position="202"/>
    </location>
    <ligand>
        <name>pyruvate</name>
        <dbReference type="ChEBI" id="CHEBI:15361"/>
    </ligand>
</feature>
<feature type="site" description="Part of a proton relay during catalysis" evidence="1">
    <location>
        <position position="44"/>
    </location>
</feature>
<feature type="site" description="Part of a proton relay during catalysis" evidence="1">
    <location>
        <position position="105"/>
    </location>
</feature>
<evidence type="ECO:0000255" key="1">
    <source>
        <dbReference type="HAMAP-Rule" id="MF_00418"/>
    </source>
</evidence>
<evidence type="ECO:0000305" key="2"/>
<gene>
    <name evidence="1" type="primary">dapA</name>
    <name type="ordered locus">MM_1201</name>
</gene>
<reference key="1">
    <citation type="journal article" date="2002" name="J. Mol. Microbiol. Biotechnol.">
        <title>The genome of Methanosarcina mazei: evidence for lateral gene transfer between Bacteria and Archaea.</title>
        <authorList>
            <person name="Deppenmeier U."/>
            <person name="Johann A."/>
            <person name="Hartsch T."/>
            <person name="Merkl R."/>
            <person name="Schmitz R.A."/>
            <person name="Martinez-Arias R."/>
            <person name="Henne A."/>
            <person name="Wiezer A."/>
            <person name="Baeumer S."/>
            <person name="Jacobi C."/>
            <person name="Brueggemann H."/>
            <person name="Lienard T."/>
            <person name="Christmann A."/>
            <person name="Boemecke M."/>
            <person name="Steckel S."/>
            <person name="Bhattacharyya A."/>
            <person name="Lykidis A."/>
            <person name="Overbeek R."/>
            <person name="Klenk H.-P."/>
            <person name="Gunsalus R.P."/>
            <person name="Fritz H.-J."/>
            <person name="Gottschalk G."/>
        </authorList>
    </citation>
    <scope>NUCLEOTIDE SEQUENCE [LARGE SCALE GENOMIC DNA]</scope>
    <source>
        <strain>ATCC BAA-159 / DSM 3647 / Goe1 / Go1 / JCM 11833 / OCM 88</strain>
    </source>
</reference>
<organism>
    <name type="scientific">Methanosarcina mazei (strain ATCC BAA-159 / DSM 3647 / Goe1 / Go1 / JCM 11833 / OCM 88)</name>
    <name type="common">Methanosarcina frisia</name>
    <dbReference type="NCBI Taxonomy" id="192952"/>
    <lineage>
        <taxon>Archaea</taxon>
        <taxon>Methanobacteriati</taxon>
        <taxon>Methanobacteriota</taxon>
        <taxon>Stenosarchaea group</taxon>
        <taxon>Methanomicrobia</taxon>
        <taxon>Methanosarcinales</taxon>
        <taxon>Methanosarcinaceae</taxon>
        <taxon>Methanosarcina</taxon>
    </lineage>
</organism>
<keyword id="KW-0028">Amino-acid biosynthesis</keyword>
<keyword id="KW-0963">Cytoplasm</keyword>
<keyword id="KW-0220">Diaminopimelate biosynthesis</keyword>
<keyword id="KW-0456">Lyase</keyword>
<keyword id="KW-0457">Lysine biosynthesis</keyword>
<keyword id="KW-0704">Schiff base</keyword>
<name>DAPA_METMA</name>
<proteinExistence type="inferred from homology"/>
<comment type="function">
    <text evidence="1">Catalyzes the condensation of (S)-aspartate-beta-semialdehyde [(S)-ASA] and pyruvate to 4-hydroxy-tetrahydrodipicolinate (HTPA).</text>
</comment>
<comment type="catalytic activity">
    <reaction evidence="1">
        <text>L-aspartate 4-semialdehyde + pyruvate = (2S,4S)-4-hydroxy-2,3,4,5-tetrahydrodipicolinate + H2O + H(+)</text>
        <dbReference type="Rhea" id="RHEA:34171"/>
        <dbReference type="ChEBI" id="CHEBI:15361"/>
        <dbReference type="ChEBI" id="CHEBI:15377"/>
        <dbReference type="ChEBI" id="CHEBI:15378"/>
        <dbReference type="ChEBI" id="CHEBI:67139"/>
        <dbReference type="ChEBI" id="CHEBI:537519"/>
        <dbReference type="EC" id="4.3.3.7"/>
    </reaction>
</comment>
<comment type="pathway">
    <text evidence="1">Amino-acid biosynthesis; L-lysine biosynthesis via DAP pathway; (S)-tetrahydrodipicolinate from L-aspartate: step 3/4.</text>
</comment>
<comment type="subunit">
    <text evidence="1">Homotetramer; dimer of dimers.</text>
</comment>
<comment type="subcellular location">
    <subcellularLocation>
        <location evidence="1">Cytoplasm</location>
    </subcellularLocation>
</comment>
<comment type="similarity">
    <text evidence="1">Belongs to the DapA family.</text>
</comment>
<comment type="caution">
    <text evidence="2">Was originally thought to be a dihydrodipicolinate synthase (DHDPS), catalyzing the condensation of (S)-aspartate-beta-semialdehyde [(S)-ASA] and pyruvate to dihydrodipicolinate (DHDP). However, it was shown in E.coli that the product of the enzymatic reaction is not dihydrodipicolinate but in fact (4S)-4-hydroxy-2,3,4,5-tetrahydro-(2S)-dipicolinic acid (HTPA), and that the consecutive dehydration reaction leading to DHDP is not spontaneous but catalyzed by DapB.</text>
</comment>
<protein>
    <recommendedName>
        <fullName evidence="1">4-hydroxy-tetrahydrodipicolinate synthase</fullName>
        <shortName evidence="1">HTPA synthase</shortName>
        <ecNumber evidence="1">4.3.3.7</ecNumber>
    </recommendedName>
</protein>